<protein>
    <recommendedName>
        <fullName evidence="2">Endolysin</fullName>
        <ecNumber evidence="2 5">3.5.1.28</ecNumber>
    </recommendedName>
    <alternativeName>
        <fullName evidence="2">N-acetylmuramoyl-L-alanine amidase</fullName>
    </alternativeName>
    <alternativeName>
        <fullName evidence="8">T7 endolysin</fullName>
    </alternativeName>
</protein>
<evidence type="ECO:0000255" key="1"/>
<evidence type="ECO:0000255" key="2">
    <source>
        <dbReference type="HAMAP-Rule" id="MF_04111"/>
    </source>
</evidence>
<evidence type="ECO:0000269" key="3">
    <source>
    </source>
</evidence>
<evidence type="ECO:0000269" key="4">
    <source>
    </source>
</evidence>
<evidence type="ECO:0000269" key="5">
    <source>
    </source>
</evidence>
<evidence type="ECO:0000269" key="6">
    <source>
    </source>
</evidence>
<evidence type="ECO:0000269" key="7">
    <source>
    </source>
</evidence>
<evidence type="ECO:0000305" key="8"/>
<evidence type="ECO:0000305" key="9">
    <source>
    </source>
</evidence>
<evidence type="ECO:0007744" key="10">
    <source>
        <dbReference type="PDB" id="1LBA"/>
    </source>
</evidence>
<evidence type="ECO:0007829" key="11">
    <source>
        <dbReference type="PDB" id="1ARO"/>
    </source>
</evidence>
<evidence type="ECO:0007829" key="12">
    <source>
        <dbReference type="PDB" id="1LBA"/>
    </source>
</evidence>
<feature type="initiator methionine" description="Removed; by host">
    <location>
        <position position="1"/>
    </location>
</feature>
<feature type="chain" id="PRO_0000164410" description="Endolysin">
    <location>
        <begin position="2"/>
        <end position="151"/>
    </location>
</feature>
<feature type="domain" description="N-acetylmuramoyl-L-alanine amidase" evidence="1">
    <location>
        <begin position="10"/>
        <end position="132"/>
    </location>
</feature>
<feature type="binding site" evidence="2 5 10">
    <location>
        <position position="18"/>
    </location>
    <ligand>
        <name>Zn(2+)</name>
        <dbReference type="ChEBI" id="CHEBI:29105"/>
    </ligand>
</feature>
<feature type="binding site" evidence="2 5 10">
    <location>
        <position position="123"/>
    </location>
    <ligand>
        <name>Zn(2+)</name>
        <dbReference type="ChEBI" id="CHEBI:29105"/>
    </ligand>
</feature>
<feature type="binding site" evidence="2 5 10">
    <location>
        <position position="131"/>
    </location>
    <ligand>
        <name>Zn(2+)</name>
        <dbReference type="ChEBI" id="CHEBI:29105"/>
    </ligand>
</feature>
<feature type="site" description="Essential for amidase activity and zinc hydrate coordination" evidence="2 5">
    <location>
        <position position="47"/>
    </location>
</feature>
<feature type="site" description="Important for catalytic activity" evidence="5 10">
    <location>
        <position position="129"/>
    </location>
</feature>
<feature type="mutagenesis site" description="Complete loss of amidase activity." evidence="5">
    <original>H</original>
    <variation>N</variation>
    <variation>Q</variation>
    <variation>R</variation>
    <location>
        <position position="18"/>
    </location>
</feature>
<feature type="mutagenesis site" description="Complete loss of amidase activity." evidence="5">
    <original>Y</original>
    <variation>D</variation>
    <variation>F</variation>
    <variation>L</variation>
    <location>
        <position position="47"/>
    </location>
</feature>
<feature type="mutagenesis site" description="Complete loss of amidase activity." evidence="5">
    <original>K</original>
    <variation>I</variation>
    <variation>M</variation>
    <variation>Q</variation>
    <variation>W</variation>
    <variation>Y</variation>
    <location>
        <position position="129"/>
    </location>
</feature>
<feature type="sequence conflict" description="In Ref. 3; AAB32819." evidence="8" ref="3">
    <original>G</original>
    <variation>V</variation>
    <location>
        <position position="90"/>
    </location>
</feature>
<feature type="sequence conflict" description="In Ref. 1, 2 and 3." evidence="8" ref="1 2 3">
    <original>V</original>
    <variation>G</variation>
    <location>
        <position position="119"/>
    </location>
</feature>
<feature type="strand" evidence="12">
    <location>
        <begin position="14"/>
        <end position="19"/>
    </location>
</feature>
<feature type="helix" evidence="12">
    <location>
        <begin position="30"/>
        <end position="39"/>
    </location>
</feature>
<feature type="strand" evidence="12">
    <location>
        <begin position="48"/>
        <end position="51"/>
    </location>
</feature>
<feature type="strand" evidence="11">
    <location>
        <begin position="53"/>
        <end position="55"/>
    </location>
</feature>
<feature type="strand" evidence="12">
    <location>
        <begin position="57"/>
        <end position="59"/>
    </location>
</feature>
<feature type="strand" evidence="12">
    <location>
        <begin position="68"/>
        <end position="70"/>
    </location>
</feature>
<feature type="helix" evidence="12">
    <location>
        <begin position="74"/>
        <end position="76"/>
    </location>
</feature>
<feature type="strand" evidence="12">
    <location>
        <begin position="77"/>
        <end position="83"/>
    </location>
</feature>
<feature type="strand" evidence="11">
    <location>
        <begin position="90"/>
        <end position="92"/>
    </location>
</feature>
<feature type="helix" evidence="12">
    <location>
        <begin position="98"/>
        <end position="114"/>
    </location>
</feature>
<feature type="turn" evidence="11">
    <location>
        <begin position="115"/>
        <end position="117"/>
    </location>
</feature>
<feature type="strand" evidence="12">
    <location>
        <begin position="119"/>
        <end position="122"/>
    </location>
</feature>
<feature type="helix" evidence="12">
    <location>
        <begin position="123"/>
        <end position="125"/>
    </location>
</feature>
<feature type="strand" evidence="12">
    <location>
        <begin position="127"/>
        <end position="129"/>
    </location>
</feature>
<feature type="helix" evidence="12">
    <location>
        <begin position="136"/>
        <end position="142"/>
    </location>
</feature>
<organismHost>
    <name type="scientific">Escherichia coli</name>
    <dbReference type="NCBI Taxonomy" id="562"/>
</organismHost>
<accession>P00806</accession>
<accession>Q38567</accession>
<gene>
    <name type="ordered locus">3.5</name>
</gene>
<reference key="1">
    <citation type="journal article" date="1983" name="J. Mol. Biol.">
        <title>Complete nucleotide sequence of bacteriophage T7 DNA and the locations of T7 genetic elements.</title>
        <authorList>
            <person name="Dunn J.J."/>
            <person name="Studier F.W."/>
        </authorList>
    </citation>
    <scope>NUCLEOTIDE SEQUENCE [LARGE SCALE GENOMIC DNA]</scope>
</reference>
<reference key="2">
    <citation type="journal article" date="1981" name="J. Mol. Biol.">
        <title>Nucleotide sequence from the genetic left end of bacteriophage T7 DNA to the beginning of gene 4.</title>
        <authorList>
            <person name="Dunn J.J."/>
            <person name="Studier F.W."/>
        </authorList>
    </citation>
    <scope>NUCLEOTIDE SEQUENCE [GENOMIC DNA]</scope>
</reference>
<reference key="3">
    <citation type="journal article" date="1994" name="Wei Sheng Wu Xue Bao">
        <title>Cloning of T7 lysozyme gene and construction of the vector for transgenic plants resistant to bacterial infection.</title>
        <authorList>
            <person name="Huang W."/>
            <person name="Cui X."/>
            <person name="Tian Y."/>
            <person name="Lin M."/>
            <person name="Peng X."/>
        </authorList>
    </citation>
    <scope>NUCLEOTIDE SEQUENCE [GENOMIC DNA]</scope>
</reference>
<reference key="4">
    <citation type="journal article" date="1987" name="Cell">
        <title>T7 lysozyme inhibits transcription by T7 RNA polymerase.</title>
        <authorList>
            <person name="Moffatt B.A."/>
            <person name="Studier F.W."/>
        </authorList>
    </citation>
    <scope>FUNCTION</scope>
</reference>
<reference key="5">
    <citation type="journal article" date="1997" name="J. Mol. Biol.">
        <title>Mechanism of inhibition of bacteriophage T7 RNA polymerase by T7 lysozyme.</title>
        <authorList>
            <person name="Zhang X."/>
            <person name="Studier F.W."/>
        </authorList>
    </citation>
    <scope>FUNCTION</scope>
</reference>
<reference key="6">
    <citation type="journal article" date="2004" name="J. Biol. Chem.">
        <title>T7 lysozyme represses T7 RNA polymerase transcription by destabilizing the open complex during initiation.</title>
        <authorList>
            <person name="Stano N.M."/>
            <person name="Patel S.S."/>
        </authorList>
    </citation>
    <scope>FUNCTION</scope>
</reference>
<reference key="7">
    <citation type="journal article" date="2004" name="J. Mol. Biol.">
        <title>Multiple roles of T7 RNA polymerase and T7 lysozyme during bacteriophage T7 infection.</title>
        <authorList>
            <person name="Zhang X."/>
            <person name="Studier F.W."/>
        </authorList>
    </citation>
    <scope>FUNCTION</scope>
</reference>
<reference key="8">
    <citation type="journal article" date="1994" name="Proc. Natl. Acad. Sci. U.S.A.">
        <title>The structure of bacteriophage T7 lysozyme, a zinc amidase and an inhibitor of T7 RNA polymerase.</title>
        <authorList>
            <person name="Cheng X."/>
            <person name="Zhang X."/>
            <person name="Pflugrath J.W."/>
            <person name="Studier F.W."/>
        </authorList>
    </citation>
    <scope>X-RAY CRYSTALLOGRAPHY (2.2 ANGSTROMS)</scope>
    <scope>SEQUENCE REVISION TO 119</scope>
    <scope>CATALYTIC ACTIVITY</scope>
    <scope>INTERACTION WITH THE VIRAL RNA POLYMERASE</scope>
    <scope>MUTAGENESIS OF HIS-18; TYR-47 AND LYS-129</scope>
</reference>
<reference key="9">
    <citation type="journal article" date="1998" name="EMBO J.">
        <title>Structure of T7 RNA polymerase complexed to the transcriptional inhibitor T7 lysozyme.</title>
        <authorList>
            <person name="Jeruzalmi D."/>
            <person name="Steitz T.A."/>
        </authorList>
    </citation>
    <scope>X-RAY CRYSTALLOGRAPHY (2.8 ANGSTROMS) OF COMPLEX WITH POLYMERASE</scope>
    <scope>INTERACTION WITH THE VIRAL RNA POLYMERASE</scope>
</reference>
<sequence>MARVQFKQRESTDAIFVHCSATKPSQNVGVREIRQWHKEQGWLDVGYHFIIKRDGTVEAGRDEMAVGSHAKGYNHNSIGVCLVGGIDDKGKFDANFTPAQMQSLRSLLVTLLAKYEGAVLRAHHEVAPKACPSFDLKRWWEKNELVTSDRG</sequence>
<comment type="function">
    <text evidence="2 3 4 6">Plays an important role in the switch between viral transcription and genome replication. Once produced in sufficient amount, interacts with and inhibits the viral RNA polymerase that becomes unable to produce additional late transcripts. This lysozyme-polymerase complex in turn plays an active role in viral genome replication and packaging.</text>
</comment>
<comment type="function">
    <text evidence="2 9">Endolysin with amidase activity that degrades host peptidoglycans and participates with the holin and spanin proteins in the sequential events which lead to the programmed host cell lysis releasing the mature viral particles. Once the holin has permeabilized the host cell membrane, the endolysin can reach the periplasm and breaking down the peptidoglycan layer.</text>
</comment>
<comment type="catalytic activity">
    <reaction evidence="2 5">
        <text>Hydrolyzes the link between N-acetylmuramoyl residues and L-amino acid residues in certain cell-wall glycopeptides.</text>
        <dbReference type="EC" id="3.5.1.28"/>
    </reaction>
</comment>
<comment type="cofactor">
    <cofactor evidence="2 5">
        <name>Zn(2+)</name>
        <dbReference type="ChEBI" id="CHEBI:29105"/>
    </cofactor>
    <text evidence="2 5">Zn(2+) is required for amidase activity.</text>
</comment>
<comment type="activity regulation">
    <text evidence="2 5">Binding to the viral RNA polymerase inhibits amidase activity.</text>
</comment>
<comment type="subunit">
    <text evidence="2 5 7">Interacts with the viral RNA polymerase.</text>
</comment>
<comment type="subcellular location">
    <subcellularLocation>
        <location evidence="2">Host cytoplasm</location>
    </subcellularLocation>
    <text evidence="2">The endolysin is cytoplasmic, but can reach the periplasmic space with the help of the holins which disrupt the host cell membrane.</text>
</comment>
<comment type="similarity">
    <text evidence="2">Belongs to the N-acetylmuramoyl-L-alanine amidase 2 family.</text>
</comment>
<organism>
    <name type="scientific">Escherichia phage T7</name>
    <name type="common">Bacteriophage T7</name>
    <dbReference type="NCBI Taxonomy" id="10760"/>
    <lineage>
        <taxon>Viruses</taxon>
        <taxon>Duplodnaviria</taxon>
        <taxon>Heunggongvirae</taxon>
        <taxon>Uroviricota</taxon>
        <taxon>Caudoviricetes</taxon>
        <taxon>Autographiviridae</taxon>
        <taxon>Studiervirinae</taxon>
        <taxon>Teseptimavirus</taxon>
        <taxon>Teseptimavirus T7</taxon>
    </lineage>
</organism>
<keyword id="KW-0002">3D-structure</keyword>
<keyword id="KW-0929">Antimicrobial</keyword>
<keyword id="KW-0081">Bacteriolytic enzyme</keyword>
<keyword id="KW-0204">Cytolysis</keyword>
<keyword id="KW-0578">Host cell lysis by virus</keyword>
<keyword id="KW-1035">Host cytoplasm</keyword>
<keyword id="KW-0378">Hydrolase</keyword>
<keyword id="KW-0426">Late protein</keyword>
<keyword id="KW-0479">Metal-binding</keyword>
<keyword id="KW-1185">Reference proteome</keyword>
<keyword id="KW-1188">Viral release from host cell</keyword>
<keyword id="KW-0862">Zinc</keyword>
<proteinExistence type="evidence at protein level"/>
<dbReference type="EC" id="3.5.1.28" evidence="2 5"/>
<dbReference type="EMBL" id="V01146">
    <property type="protein sequence ID" value="CAA24403.1"/>
    <property type="molecule type" value="Genomic_DNA"/>
</dbReference>
<dbReference type="EMBL" id="V01127">
    <property type="protein sequence ID" value="CAA24346.1"/>
    <property type="molecule type" value="Genomic_DNA"/>
</dbReference>
<dbReference type="EMBL" id="S75616">
    <property type="protein sequence ID" value="AAB32819.1"/>
    <property type="molecule type" value="Genomic_DNA"/>
</dbReference>
<dbReference type="PIR" id="C94615">
    <property type="entry name" value="MUBPA7"/>
</dbReference>
<dbReference type="RefSeq" id="NP_041973.1">
    <property type="nucleotide sequence ID" value="NC_001604.1"/>
</dbReference>
<dbReference type="PDB" id="1ARO">
    <property type="method" value="X-ray"/>
    <property type="resolution" value="2.80 A"/>
    <property type="chains" value="L=1-151"/>
</dbReference>
<dbReference type="PDB" id="1LBA">
    <property type="method" value="X-ray"/>
    <property type="resolution" value="2.20 A"/>
    <property type="chains" value="A=7-151"/>
</dbReference>
<dbReference type="PDBsum" id="1ARO"/>
<dbReference type="PDBsum" id="1LBA"/>
<dbReference type="SMR" id="P00806"/>
<dbReference type="DIP" id="DIP-6090N"/>
<dbReference type="IntAct" id="P00806">
    <property type="interactions" value="1"/>
</dbReference>
<dbReference type="MINT" id="P00806"/>
<dbReference type="KEGG" id="vg:1261077"/>
<dbReference type="OrthoDB" id="13080at10239"/>
<dbReference type="EvolutionaryTrace" id="P00806"/>
<dbReference type="Proteomes" id="UP000000840">
    <property type="component" value="Genome"/>
</dbReference>
<dbReference type="GO" id="GO:0030430">
    <property type="term" value="C:host cell cytoplasm"/>
    <property type="evidence" value="ECO:0007669"/>
    <property type="project" value="UniProtKB-SubCell"/>
</dbReference>
<dbReference type="GO" id="GO:0008745">
    <property type="term" value="F:N-acetylmuramoyl-L-alanine amidase activity"/>
    <property type="evidence" value="ECO:0000314"/>
    <property type="project" value="UniProtKB"/>
</dbReference>
<dbReference type="GO" id="GO:0008270">
    <property type="term" value="F:zinc ion binding"/>
    <property type="evidence" value="ECO:0007669"/>
    <property type="project" value="InterPro"/>
</dbReference>
<dbReference type="GO" id="GO:0042742">
    <property type="term" value="P:defense response to bacterium"/>
    <property type="evidence" value="ECO:0007669"/>
    <property type="project" value="UniProtKB-KW"/>
</dbReference>
<dbReference type="GO" id="GO:0032897">
    <property type="term" value="P:negative regulation of viral transcription"/>
    <property type="evidence" value="ECO:0000314"/>
    <property type="project" value="UniProtKB"/>
</dbReference>
<dbReference type="GO" id="GO:0009253">
    <property type="term" value="P:peptidoglycan catabolic process"/>
    <property type="evidence" value="ECO:0007669"/>
    <property type="project" value="UniProtKB-UniRule"/>
</dbReference>
<dbReference type="GO" id="GO:0044659">
    <property type="term" value="P:viral release from host cell by cytolysis"/>
    <property type="evidence" value="ECO:0000314"/>
    <property type="project" value="UniProtKB"/>
</dbReference>
<dbReference type="CDD" id="cd06583">
    <property type="entry name" value="PGRP"/>
    <property type="match status" value="1"/>
</dbReference>
<dbReference type="FunFam" id="3.40.80.10:FF:000009">
    <property type="entry name" value="Endolysin"/>
    <property type="match status" value="1"/>
</dbReference>
<dbReference type="Gene3D" id="3.40.80.10">
    <property type="entry name" value="Peptidoglycan recognition protein-like"/>
    <property type="match status" value="1"/>
</dbReference>
<dbReference type="HAMAP" id="MF_04111">
    <property type="entry name" value="ENDOLYSIN_T7"/>
    <property type="match status" value="1"/>
</dbReference>
<dbReference type="InterPro" id="IPR036505">
    <property type="entry name" value="Amidase/PGRP_sf"/>
</dbReference>
<dbReference type="InterPro" id="IPR002502">
    <property type="entry name" value="Amidase_domain"/>
</dbReference>
<dbReference type="InterPro" id="IPR034689">
    <property type="entry name" value="Endolysin_T7_type"/>
</dbReference>
<dbReference type="InterPro" id="IPR015510">
    <property type="entry name" value="PGRP"/>
</dbReference>
<dbReference type="InterPro" id="IPR006619">
    <property type="entry name" value="PGRP_domain_met/bac"/>
</dbReference>
<dbReference type="PANTHER" id="PTHR11022">
    <property type="entry name" value="PEPTIDOGLYCAN RECOGNITION PROTEIN"/>
    <property type="match status" value="1"/>
</dbReference>
<dbReference type="PANTHER" id="PTHR11022:SF41">
    <property type="entry name" value="PEPTIDOGLYCAN-RECOGNITION PROTEIN LC-RELATED"/>
    <property type="match status" value="1"/>
</dbReference>
<dbReference type="Pfam" id="PF01510">
    <property type="entry name" value="Amidase_2"/>
    <property type="match status" value="1"/>
</dbReference>
<dbReference type="SMART" id="SM00644">
    <property type="entry name" value="Ami_2"/>
    <property type="match status" value="1"/>
</dbReference>
<dbReference type="SMART" id="SM00701">
    <property type="entry name" value="PGRP"/>
    <property type="match status" value="1"/>
</dbReference>
<dbReference type="SUPFAM" id="SSF55846">
    <property type="entry name" value="N-acetylmuramoyl-L-alanine amidase-like"/>
    <property type="match status" value="1"/>
</dbReference>
<name>ENLYS_BPT7</name>